<sequence length="478" mass="54896">MAELADAPDLGSGARKGVRVRLPPPAPHKNGGKNESRGSGQGSLFKALTVEIQGDSVKEKIDEMYKQLQKTVQIQGFRKGKAPLWIVRAKYKDYVEEEVGKKIADETLQKALEEANLKPVADVFLEKVEVDEKEGKVKYVVSFEVAPEFELKDVENLEVEVPKIEFKEDYVKEELERLREANAVWEPKDENEPAQEGDMLVVEYEVEEIGGEGEKVKQETSVILGQGMLRPEVEEALKGKKVGEEVELKELPLYDQEGKEVGKVNIKIKIKEIKKKVLPELNDEFAKELGYASLKDLEEKIREDIKQKLEKLKEQVIEERVADKLVEIHDIPVPQTLLRRELSFLVDRRLRELQALGIDTRYVDIKKIVEEVQPIAEANIKLRFILDKYAQEKGIEPTGEDIEAQYKELAEQYGTTVDEIKKYFKENNLEQVVYEDARRKKALKEIISKVKIKEVEQKQEEEKKEEKEEVKNESQGNT</sequence>
<accession>O67358</accession>
<reference key="1">
    <citation type="journal article" date="1998" name="Nature">
        <title>The complete genome of the hyperthermophilic bacterium Aquifex aeolicus.</title>
        <authorList>
            <person name="Deckert G."/>
            <person name="Warren P.V."/>
            <person name="Gaasterland T."/>
            <person name="Young W.G."/>
            <person name="Lenox A.L."/>
            <person name="Graham D.E."/>
            <person name="Overbeek R."/>
            <person name="Snead M.A."/>
            <person name="Keller M."/>
            <person name="Aujay M."/>
            <person name="Huber R."/>
            <person name="Feldman R.A."/>
            <person name="Short J.M."/>
            <person name="Olsen G.J."/>
            <person name="Swanson R.V."/>
        </authorList>
    </citation>
    <scope>NUCLEOTIDE SEQUENCE [LARGE SCALE GENOMIC DNA]</scope>
    <source>
        <strain>VF5</strain>
    </source>
</reference>
<evidence type="ECO:0000255" key="1">
    <source>
        <dbReference type="HAMAP-Rule" id="MF_00303"/>
    </source>
</evidence>
<evidence type="ECO:0000256" key="2">
    <source>
        <dbReference type="SAM" id="MobiDB-lite"/>
    </source>
</evidence>
<evidence type="ECO:0000303" key="3">
    <source>
    </source>
</evidence>
<evidence type="ECO:0000305" key="4"/>
<comment type="function">
    <text evidence="1">Involved in protein export. Acts as a chaperone by maintaining the newly synthesized protein in an open conformation. Functions as a peptidyl-prolyl cis-trans isomerase.</text>
</comment>
<comment type="catalytic activity">
    <reaction evidence="1">
        <text>[protein]-peptidylproline (omega=180) = [protein]-peptidylproline (omega=0)</text>
        <dbReference type="Rhea" id="RHEA:16237"/>
        <dbReference type="Rhea" id="RHEA-COMP:10747"/>
        <dbReference type="Rhea" id="RHEA-COMP:10748"/>
        <dbReference type="ChEBI" id="CHEBI:83833"/>
        <dbReference type="ChEBI" id="CHEBI:83834"/>
        <dbReference type="EC" id="5.2.1.8"/>
    </reaction>
</comment>
<comment type="subcellular location">
    <subcellularLocation>
        <location evidence="1">Cytoplasm</location>
    </subcellularLocation>
    <text evidence="1">About half TF is bound to the ribosome near the polypeptide exit tunnel while the other half is free in the cytoplasm.</text>
</comment>
<comment type="domain">
    <text evidence="1">Consists of 3 domains; the N-terminus binds the ribosome, the middle domain has PPIase activity, while the C-terminus has intrinsic chaperone activity on its own.</text>
</comment>
<comment type="miscellaneous">
    <text evidence="4">The N-terminus of this protein overlaps with a tRNA(Leu) encoded in another frame on the same strand.</text>
</comment>
<comment type="similarity">
    <text evidence="1">Belongs to the FKBP-type PPIase family. Tig subfamily.</text>
</comment>
<name>TIG_AQUAE</name>
<gene>
    <name evidence="1 3" type="primary">tig</name>
    <name type="ordered locus">aq_1340</name>
</gene>
<organism>
    <name type="scientific">Aquifex aeolicus (strain VF5)</name>
    <dbReference type="NCBI Taxonomy" id="224324"/>
    <lineage>
        <taxon>Bacteria</taxon>
        <taxon>Pseudomonadati</taxon>
        <taxon>Aquificota</taxon>
        <taxon>Aquificia</taxon>
        <taxon>Aquificales</taxon>
        <taxon>Aquificaceae</taxon>
        <taxon>Aquifex</taxon>
    </lineage>
</organism>
<dbReference type="EC" id="5.2.1.8" evidence="1"/>
<dbReference type="EMBL" id="AE000657">
    <property type="protein sequence ID" value="AAC07311.1"/>
    <property type="molecule type" value="Genomic_DNA"/>
</dbReference>
<dbReference type="PIR" id="C70416">
    <property type="entry name" value="C70416"/>
</dbReference>
<dbReference type="RefSeq" id="NP_213922.1">
    <property type="nucleotide sequence ID" value="NC_000918.1"/>
</dbReference>
<dbReference type="SMR" id="O67358"/>
<dbReference type="FunCoup" id="O67358">
    <property type="interactions" value="528"/>
</dbReference>
<dbReference type="STRING" id="224324.aq_1340"/>
<dbReference type="EnsemblBacteria" id="AAC07311">
    <property type="protein sequence ID" value="AAC07311"/>
    <property type="gene ID" value="aq_1340"/>
</dbReference>
<dbReference type="KEGG" id="aae:aq_1340"/>
<dbReference type="PATRIC" id="fig|224324.8.peg.1047"/>
<dbReference type="eggNOG" id="COG0544">
    <property type="taxonomic scope" value="Bacteria"/>
</dbReference>
<dbReference type="HOGENOM" id="CLU_033058_3_1_0"/>
<dbReference type="InParanoid" id="O67358"/>
<dbReference type="OrthoDB" id="9767721at2"/>
<dbReference type="Proteomes" id="UP000000798">
    <property type="component" value="Chromosome"/>
</dbReference>
<dbReference type="GO" id="GO:0005737">
    <property type="term" value="C:cytoplasm"/>
    <property type="evidence" value="ECO:0007669"/>
    <property type="project" value="UniProtKB-SubCell"/>
</dbReference>
<dbReference type="GO" id="GO:0003755">
    <property type="term" value="F:peptidyl-prolyl cis-trans isomerase activity"/>
    <property type="evidence" value="ECO:0000318"/>
    <property type="project" value="GO_Central"/>
</dbReference>
<dbReference type="GO" id="GO:0044183">
    <property type="term" value="F:protein folding chaperone"/>
    <property type="evidence" value="ECO:0000318"/>
    <property type="project" value="GO_Central"/>
</dbReference>
<dbReference type="GO" id="GO:0043022">
    <property type="term" value="F:ribosome binding"/>
    <property type="evidence" value="ECO:0000318"/>
    <property type="project" value="GO_Central"/>
</dbReference>
<dbReference type="GO" id="GO:0051083">
    <property type="term" value="P:'de novo' cotranslational protein folding"/>
    <property type="evidence" value="ECO:0000318"/>
    <property type="project" value="GO_Central"/>
</dbReference>
<dbReference type="GO" id="GO:0051301">
    <property type="term" value="P:cell division"/>
    <property type="evidence" value="ECO:0007669"/>
    <property type="project" value="UniProtKB-KW"/>
</dbReference>
<dbReference type="GO" id="GO:0061077">
    <property type="term" value="P:chaperone-mediated protein folding"/>
    <property type="evidence" value="ECO:0000318"/>
    <property type="project" value="GO_Central"/>
</dbReference>
<dbReference type="GO" id="GO:0015031">
    <property type="term" value="P:protein transport"/>
    <property type="evidence" value="ECO:0007669"/>
    <property type="project" value="UniProtKB-UniRule"/>
</dbReference>
<dbReference type="GO" id="GO:0043335">
    <property type="term" value="P:protein unfolding"/>
    <property type="evidence" value="ECO:0000318"/>
    <property type="project" value="GO_Central"/>
</dbReference>
<dbReference type="AntiFam" id="ANF00015">
    <property type="entry name" value="tRNA translation"/>
</dbReference>
<dbReference type="FunFam" id="3.10.50.40:FF:000112">
    <property type="entry name" value="Trigger factor"/>
    <property type="match status" value="1"/>
</dbReference>
<dbReference type="Gene3D" id="3.10.50.40">
    <property type="match status" value="1"/>
</dbReference>
<dbReference type="Gene3D" id="3.30.70.1050">
    <property type="entry name" value="Trigger factor ribosome-binding domain"/>
    <property type="match status" value="1"/>
</dbReference>
<dbReference type="Gene3D" id="1.10.3120.10">
    <property type="entry name" value="Trigger factor, C-terminal domain"/>
    <property type="match status" value="1"/>
</dbReference>
<dbReference type="HAMAP" id="MF_00303">
    <property type="entry name" value="Trigger_factor_Tig"/>
    <property type="match status" value="1"/>
</dbReference>
<dbReference type="InterPro" id="IPR046357">
    <property type="entry name" value="PPIase_dom_sf"/>
</dbReference>
<dbReference type="InterPro" id="IPR005215">
    <property type="entry name" value="Trig_fac"/>
</dbReference>
<dbReference type="InterPro" id="IPR008880">
    <property type="entry name" value="Trigger_fac_C"/>
</dbReference>
<dbReference type="InterPro" id="IPR037041">
    <property type="entry name" value="Trigger_fac_C_sf"/>
</dbReference>
<dbReference type="InterPro" id="IPR008881">
    <property type="entry name" value="Trigger_fac_ribosome-bd_bac"/>
</dbReference>
<dbReference type="InterPro" id="IPR036611">
    <property type="entry name" value="Trigger_fac_ribosome-bd_sf"/>
</dbReference>
<dbReference type="InterPro" id="IPR027304">
    <property type="entry name" value="Trigger_fact/SurA_dom_sf"/>
</dbReference>
<dbReference type="NCBIfam" id="TIGR00115">
    <property type="entry name" value="tig"/>
    <property type="match status" value="1"/>
</dbReference>
<dbReference type="PANTHER" id="PTHR30560">
    <property type="entry name" value="TRIGGER FACTOR CHAPERONE AND PEPTIDYL-PROLYL CIS/TRANS ISOMERASE"/>
    <property type="match status" value="1"/>
</dbReference>
<dbReference type="PANTHER" id="PTHR30560:SF3">
    <property type="entry name" value="TRIGGER FACTOR-LIKE PROTEIN TIG, CHLOROPLASTIC"/>
    <property type="match status" value="1"/>
</dbReference>
<dbReference type="Pfam" id="PF05698">
    <property type="entry name" value="Trigger_C"/>
    <property type="match status" value="1"/>
</dbReference>
<dbReference type="Pfam" id="PF05697">
    <property type="entry name" value="Trigger_N"/>
    <property type="match status" value="1"/>
</dbReference>
<dbReference type="PIRSF" id="PIRSF003095">
    <property type="entry name" value="Trigger_factor"/>
    <property type="match status" value="1"/>
</dbReference>
<dbReference type="SUPFAM" id="SSF54534">
    <property type="entry name" value="FKBP-like"/>
    <property type="match status" value="1"/>
</dbReference>
<dbReference type="SUPFAM" id="SSF109998">
    <property type="entry name" value="Triger factor/SurA peptide-binding domain-like"/>
    <property type="match status" value="1"/>
</dbReference>
<dbReference type="SUPFAM" id="SSF102735">
    <property type="entry name" value="Trigger factor ribosome-binding domain"/>
    <property type="match status" value="1"/>
</dbReference>
<feature type="chain" id="PRO_0000179302" description="Trigger factor">
    <location>
        <begin position="1"/>
        <end position="478"/>
    </location>
</feature>
<feature type="domain" description="PPIase FKBP-type">
    <location>
        <begin position="197"/>
        <end position="279"/>
    </location>
</feature>
<feature type="region of interest" description="Disordered" evidence="2">
    <location>
        <begin position="1"/>
        <end position="41"/>
    </location>
</feature>
<feature type="region of interest" description="Disordered" evidence="2">
    <location>
        <begin position="455"/>
        <end position="478"/>
    </location>
</feature>
<feature type="compositionally biased region" description="Basic and acidic residues" evidence="2">
    <location>
        <begin position="455"/>
        <end position="472"/>
    </location>
</feature>
<proteinExistence type="inferred from homology"/>
<protein>
    <recommendedName>
        <fullName evidence="1">Trigger factor</fullName>
        <shortName evidence="1">TF</shortName>
        <ecNumber evidence="1">5.2.1.8</ecNumber>
    </recommendedName>
    <alternativeName>
        <fullName evidence="1">PPIase</fullName>
    </alternativeName>
</protein>
<keyword id="KW-0131">Cell cycle</keyword>
<keyword id="KW-0132">Cell division</keyword>
<keyword id="KW-0143">Chaperone</keyword>
<keyword id="KW-0963">Cytoplasm</keyword>
<keyword id="KW-0413">Isomerase</keyword>
<keyword id="KW-1185">Reference proteome</keyword>
<keyword id="KW-0697">Rotamase</keyword>